<name>SNURF_MOUSE</name>
<dbReference type="EMBL" id="AF101042">
    <property type="protein sequence ID" value="AAD31389.1"/>
    <property type="molecule type" value="mRNA"/>
</dbReference>
<dbReference type="EMBL" id="AF332579">
    <property type="protein sequence ID" value="AAK77666.1"/>
    <property type="molecule type" value="Genomic_DNA"/>
</dbReference>
<dbReference type="EMBL" id="AF332579">
    <property type="protein sequence ID" value="AAK77667.1"/>
    <property type="molecule type" value="Genomic_DNA"/>
</dbReference>
<dbReference type="EMBL" id="BC132082">
    <property type="protein sequence ID" value="AAI32083.1"/>
    <property type="molecule type" value="mRNA"/>
</dbReference>
<dbReference type="EMBL" id="BC132084">
    <property type="protein sequence ID" value="AAI32085.1"/>
    <property type="molecule type" value="mRNA"/>
</dbReference>
<dbReference type="CCDS" id="CCDS57553.1"/>
<dbReference type="RefSeq" id="NP_149409.1">
    <property type="nucleotide sequence ID" value="NM_033174.4"/>
</dbReference>
<dbReference type="FunCoup" id="Q9WU12">
    <property type="interactions" value="488"/>
</dbReference>
<dbReference type="STRING" id="10090.ENSMUSP00000141531"/>
<dbReference type="iPTMnet" id="Q9WU12"/>
<dbReference type="PhosphoSitePlus" id="Q9WU12"/>
<dbReference type="ProteomicsDB" id="261464"/>
<dbReference type="DNASU" id="84704"/>
<dbReference type="Ensembl" id="ENSMUST00000179360.3">
    <property type="protein sequence ID" value="ENSMUSP00000136053.2"/>
    <property type="gene ID" value="ENSMUSG00000000948.17"/>
</dbReference>
<dbReference type="Ensembl" id="ENSMUST00000194059.2">
    <property type="protein sequence ID" value="ENSMUSP00000141531.2"/>
    <property type="gene ID" value="ENSMUSG00000102627.2"/>
</dbReference>
<dbReference type="GeneID" id="84704"/>
<dbReference type="KEGG" id="mmu:84704"/>
<dbReference type="AGR" id="MGI:1891236"/>
<dbReference type="CTD" id="8926"/>
<dbReference type="MGI" id="MGI:1891236">
    <property type="gene designation" value="Snurf"/>
</dbReference>
<dbReference type="VEuPathDB" id="HostDB:ENSMUSG00000000948"/>
<dbReference type="VEuPathDB" id="HostDB:ENSMUSG00000102627"/>
<dbReference type="GeneTree" id="ENSGT00390000009320"/>
<dbReference type="HOGENOM" id="CLU_165583_0_0_1"/>
<dbReference type="InParanoid" id="Q9WU12"/>
<dbReference type="OMA" id="QVKHRIA"/>
<dbReference type="OrthoDB" id="9727301at2759"/>
<dbReference type="TreeFam" id="TF338383"/>
<dbReference type="BioGRID-ORCS" id="84704">
    <property type="hits" value="1 hit in 75 CRISPR screens"/>
</dbReference>
<dbReference type="ChiTaRS" id="Snurf">
    <property type="organism name" value="mouse"/>
</dbReference>
<dbReference type="PRO" id="PR:Q9WU12"/>
<dbReference type="Proteomes" id="UP000000589">
    <property type="component" value="Chromosome 7"/>
</dbReference>
<dbReference type="RNAct" id="Q9WU12">
    <property type="molecule type" value="protein"/>
</dbReference>
<dbReference type="Bgee" id="ENSMUSG00000000948">
    <property type="expression patterns" value="Expressed in epiblast (generic) and 60 other cell types or tissues"/>
</dbReference>
<dbReference type="ExpressionAtlas" id="Q9WU12">
    <property type="expression patterns" value="baseline and differential"/>
</dbReference>
<dbReference type="GO" id="GO:0016607">
    <property type="term" value="C:nuclear speck"/>
    <property type="evidence" value="ECO:0007669"/>
    <property type="project" value="Ensembl"/>
</dbReference>
<dbReference type="GO" id="GO:0005634">
    <property type="term" value="C:nucleus"/>
    <property type="evidence" value="ECO:0000314"/>
    <property type="project" value="MGI"/>
</dbReference>
<dbReference type="GO" id="GO:0051117">
    <property type="term" value="F:ATPase binding"/>
    <property type="evidence" value="ECO:0000353"/>
    <property type="project" value="MGI"/>
</dbReference>
<dbReference type="InterPro" id="IPR009847">
    <property type="entry name" value="SNURF"/>
</dbReference>
<dbReference type="PANTHER" id="PTHR14508">
    <property type="entry name" value="SNRPN UPSTREAM READING FRAME PROTEIN, SNURF"/>
    <property type="match status" value="1"/>
</dbReference>
<dbReference type="PANTHER" id="PTHR14508:SF2">
    <property type="entry name" value="SNRPN UPSTREAM READING FRAME PROTEIN-RELATED"/>
    <property type="match status" value="1"/>
</dbReference>
<dbReference type="Pfam" id="PF07192">
    <property type="entry name" value="SNURF"/>
    <property type="match status" value="1"/>
</dbReference>
<reference key="1">
    <citation type="journal article" date="1999" name="Proc. Natl. Acad. Sci. U.S.A.">
        <title>An imprinted, mammalian bicistronic transcript encodes two independent proteins.</title>
        <authorList>
            <person name="Gray T.A."/>
            <person name="Saitoh S."/>
            <person name="Nicholls R.D."/>
        </authorList>
    </citation>
    <scope>NUCLEOTIDE SEQUENCE [MRNA]</scope>
    <scope>SUBCELLULAR LOCATION</scope>
    <scope>TISSUE SPECIFICITY</scope>
</reference>
<reference key="2">
    <citation type="journal article" date="2001" name="Nat. Genet.">
        <title>The SNRPN promoter is not required for genomic imprinting of the Prader-Willi/Angelman domain in mice.</title>
        <authorList>
            <person name="Bressler J."/>
            <person name="Tsai T.F."/>
            <person name="Wu M.Y."/>
            <person name="Tsai S.F."/>
            <person name="Ramirez M.A."/>
            <person name="Armstrong D."/>
            <person name="Beaudet A.L."/>
        </authorList>
    </citation>
    <scope>NUCLEOTIDE SEQUENCE [GENOMIC DNA]</scope>
    <source>
        <strain>129/Sv</strain>
    </source>
</reference>
<reference key="3">
    <citation type="journal article" date="2004" name="Genome Res.">
        <title>The status, quality, and expansion of the NIH full-length cDNA project: the Mammalian Gene Collection (MGC).</title>
        <authorList>
            <consortium name="The MGC Project Team"/>
        </authorList>
    </citation>
    <scope>NUCLEOTIDE SEQUENCE [LARGE SCALE MRNA]</scope>
    <source>
        <tissue>Brain</tissue>
    </source>
</reference>
<reference key="4">
    <citation type="journal article" date="2006" name="J. Hum. Genet.">
        <title>Expression of the Snurf-Snrpn IC transcript in the oocyte and its putative role in the imprinting establishment of the mouse 7C imprinting domain.</title>
        <authorList>
            <person name="Mapendano C.K."/>
            <person name="Kishino T."/>
            <person name="Miyazaki K."/>
            <person name="Kondo S."/>
            <person name="Yoshiura K."/>
            <person name="Hishikawa Y."/>
            <person name="Koji T."/>
            <person name="Niikawa N."/>
            <person name="Ohta T."/>
        </authorList>
    </citation>
    <scope>TISSUE SPECIFICITY</scope>
</reference>
<sequence>MERGRDRLHLRRTTEQHVPEVEVQVKRRRTASLSNQECHLYPRRSQQQQVPVVDFQAELRQAFLAETPRGG</sequence>
<gene>
    <name type="primary">Snurf</name>
</gene>
<comment type="subcellular location">
    <subcellularLocation>
        <location evidence="1">Nucleus</location>
    </subcellularLocation>
</comment>
<comment type="tissue specificity">
    <text evidence="1 2">Expressed in brain and embryonic stem (ES) cells (at protein level). Expressed in the brain, ovary, testis, liver, heart, kidney and muscle.</text>
</comment>
<comment type="miscellaneous">
    <text>Encoded on a bicistronic transcript that code for two proteins, SNRPN and SNURF. Only the primary 1.6-kb bicistronic SNURF-SNRPN transcript is detected.</text>
</comment>
<comment type="similarity">
    <text evidence="3">Belongs to the SNURF family.</text>
</comment>
<keyword id="KW-0539">Nucleus</keyword>
<keyword id="KW-1185">Reference proteome</keyword>
<evidence type="ECO:0000269" key="1">
    <source>
    </source>
</evidence>
<evidence type="ECO:0000269" key="2">
    <source>
    </source>
</evidence>
<evidence type="ECO:0000305" key="3"/>
<feature type="chain" id="PRO_0000312994" description="SNRPN upstream reading frame protein">
    <location>
        <begin position="1"/>
        <end position="71"/>
    </location>
</feature>
<feature type="sequence conflict" description="In Ref. 2; AAK77667." evidence="3" ref="2">
    <original>ERG</original>
    <variation>QQP</variation>
    <location>
        <begin position="2"/>
        <end position="4"/>
    </location>
</feature>
<proteinExistence type="evidence at protein level"/>
<accession>Q9WU12</accession>
<accession>Q924D8</accession>
<protein>
    <recommendedName>
        <fullName>SNRPN upstream reading frame protein</fullName>
    </recommendedName>
</protein>
<organism>
    <name type="scientific">Mus musculus</name>
    <name type="common">Mouse</name>
    <dbReference type="NCBI Taxonomy" id="10090"/>
    <lineage>
        <taxon>Eukaryota</taxon>
        <taxon>Metazoa</taxon>
        <taxon>Chordata</taxon>
        <taxon>Craniata</taxon>
        <taxon>Vertebrata</taxon>
        <taxon>Euteleostomi</taxon>
        <taxon>Mammalia</taxon>
        <taxon>Eutheria</taxon>
        <taxon>Euarchontoglires</taxon>
        <taxon>Glires</taxon>
        <taxon>Rodentia</taxon>
        <taxon>Myomorpha</taxon>
        <taxon>Muroidea</taxon>
        <taxon>Muridae</taxon>
        <taxon>Murinae</taxon>
        <taxon>Mus</taxon>
        <taxon>Mus</taxon>
    </lineage>
</organism>